<sequence length="501" mass="58119">REAREKETKALSLSRALEEALEAKEEFERQNKQLRADMEDLMSSKDDVGKNVHELEKSKRALEQQVEEMRTQLEELEDELQATEDAKLRLEVNTQAMKAQFERDLQARDEQSEEKKRLLTKQVRELEAELEDERKQRALAVASKKKMEIDLKDLEAQIEAANKARERRVKQLRRLQAQMKDYQRELEEARGSRDEIFAQSKESEKKLKSLEAEILQLQEELASSERARRHAEQERDELADEIANSASGKSALLDEKRRLEARMRQLEEELEEEQSNMELLNDRFRKTTLQVDTLNAELAAERSAAQKSDNARQQLERQNKDLKAKLQELEGAVKSKFKATISALEAKIGQLEEQLEQEAKERAAANKLVRRTEKKLKEIFMQVEDERRHADQYKEQMEKANARMKQLKRQLEEAEEEATRANASRRKLQRELDDATEANEGLSREVSTLKNRLRRGGPISFSSSRSGRPQLHIEGASLELSDDDTESKTSDVNETQPPQSE</sequence>
<keyword id="KW-0009">Actin-binding</keyword>
<keyword id="KW-0067">ATP-binding</keyword>
<keyword id="KW-0175">Coiled coil</keyword>
<keyword id="KW-0963">Cytoplasm</keyword>
<keyword id="KW-0505">Motor protein</keyword>
<keyword id="KW-0514">Muscle protein</keyword>
<keyword id="KW-0518">Myosin</keyword>
<keyword id="KW-0547">Nucleotide-binding</keyword>
<keyword id="KW-1185">Reference proteome</keyword>
<keyword id="KW-0787">Thick filament</keyword>
<accession>Q99105</accession>
<organism>
    <name type="scientific">Oryctolagus cuniculus</name>
    <name type="common">Rabbit</name>
    <dbReference type="NCBI Taxonomy" id="9986"/>
    <lineage>
        <taxon>Eukaryota</taxon>
        <taxon>Metazoa</taxon>
        <taxon>Chordata</taxon>
        <taxon>Craniata</taxon>
        <taxon>Vertebrata</taxon>
        <taxon>Euteleostomi</taxon>
        <taxon>Mammalia</taxon>
        <taxon>Eutheria</taxon>
        <taxon>Euarchontoglires</taxon>
        <taxon>Glires</taxon>
        <taxon>Lagomorpha</taxon>
        <taxon>Leporidae</taxon>
        <taxon>Oryctolagus</taxon>
    </lineage>
</organism>
<protein>
    <recommendedName>
        <fullName>Myosin heavy chain, embryonic smooth muscle isoform</fullName>
    </recommendedName>
</protein>
<proteinExistence type="evidence at transcript level"/>
<dbReference type="EMBL" id="D10280">
    <property type="protein sequence ID" value="BAA01124.1"/>
    <property type="molecule type" value="mRNA"/>
</dbReference>
<dbReference type="PIR" id="A38650">
    <property type="entry name" value="A38650"/>
</dbReference>
<dbReference type="SMR" id="Q99105"/>
<dbReference type="PaxDb" id="9986-ENSOCUP00000014315"/>
<dbReference type="eggNOG" id="KOG0160">
    <property type="taxonomic scope" value="Eukaryota"/>
</dbReference>
<dbReference type="eggNOG" id="KOG0161">
    <property type="taxonomic scope" value="Eukaryota"/>
</dbReference>
<dbReference type="InParanoid" id="Q99105"/>
<dbReference type="Proteomes" id="UP000001811">
    <property type="component" value="Unplaced"/>
</dbReference>
<dbReference type="GO" id="GO:0005923">
    <property type="term" value="C:bicellular tight junction"/>
    <property type="evidence" value="ECO:0007669"/>
    <property type="project" value="TreeGrafter"/>
</dbReference>
<dbReference type="GO" id="GO:0030016">
    <property type="term" value="C:myofibril"/>
    <property type="evidence" value="ECO:0007669"/>
    <property type="project" value="UniProtKB-SubCell"/>
</dbReference>
<dbReference type="GO" id="GO:0016459">
    <property type="term" value="C:myosin complex"/>
    <property type="evidence" value="ECO:0007669"/>
    <property type="project" value="UniProtKB-KW"/>
</dbReference>
<dbReference type="GO" id="GO:0032982">
    <property type="term" value="C:myosin filament"/>
    <property type="evidence" value="ECO:0007669"/>
    <property type="project" value="UniProtKB-KW"/>
</dbReference>
<dbReference type="GO" id="GO:0003779">
    <property type="term" value="F:actin binding"/>
    <property type="evidence" value="ECO:0007669"/>
    <property type="project" value="UniProtKB-KW"/>
</dbReference>
<dbReference type="GO" id="GO:0005524">
    <property type="term" value="F:ATP binding"/>
    <property type="evidence" value="ECO:0007669"/>
    <property type="project" value="UniProtKB-KW"/>
</dbReference>
<dbReference type="Gene3D" id="6.10.250.2420">
    <property type="match status" value="1"/>
</dbReference>
<dbReference type="InterPro" id="IPR002928">
    <property type="entry name" value="Myosin_tail"/>
</dbReference>
<dbReference type="PANTHER" id="PTHR46349">
    <property type="entry name" value="CINGULIN-LIKE PROTEIN 1-RELATED"/>
    <property type="match status" value="1"/>
</dbReference>
<dbReference type="PANTHER" id="PTHR46349:SF7">
    <property type="entry name" value="MYOSIN TAIL DOMAIN-CONTAINING PROTEIN"/>
    <property type="match status" value="1"/>
</dbReference>
<dbReference type="Pfam" id="PF01576">
    <property type="entry name" value="Myosin_tail_1"/>
    <property type="match status" value="1"/>
</dbReference>
<dbReference type="SUPFAM" id="SSF90257">
    <property type="entry name" value="Myosin rod fragments"/>
    <property type="match status" value="2"/>
</dbReference>
<feature type="chain" id="PRO_0000123390" description="Myosin heavy chain, embryonic smooth muscle isoform">
    <location>
        <begin position="1" status="less than"/>
        <end position="501"/>
    </location>
</feature>
<feature type="region of interest" description="Rodlike tail (S2 and LMM domains)">
    <location>
        <begin position="1" status="less than"/>
        <end position="501"/>
    </location>
</feature>
<feature type="region of interest" description="Disordered" evidence="2">
    <location>
        <begin position="182"/>
        <end position="202"/>
    </location>
</feature>
<feature type="region of interest" description="Disordered" evidence="2">
    <location>
        <begin position="221"/>
        <end position="254"/>
    </location>
</feature>
<feature type="region of interest" description="Disordered" evidence="2">
    <location>
        <begin position="397"/>
        <end position="501"/>
    </location>
</feature>
<feature type="coiled-coil region" evidence="1">
    <location>
        <begin position="1"/>
        <end position="457"/>
    </location>
</feature>
<feature type="compositionally biased region" description="Basic and acidic residues" evidence="2">
    <location>
        <begin position="223"/>
        <end position="233"/>
    </location>
</feature>
<feature type="compositionally biased region" description="Polar residues" evidence="2">
    <location>
        <begin position="492"/>
        <end position="501"/>
    </location>
</feature>
<feature type="non-terminal residue">
    <location>
        <position position="1"/>
    </location>
</feature>
<evidence type="ECO:0000255" key="1"/>
<evidence type="ECO:0000256" key="2">
    <source>
        <dbReference type="SAM" id="MobiDB-lite"/>
    </source>
</evidence>
<evidence type="ECO:0000305" key="3"/>
<name>MYSU_RABIT</name>
<reference key="1">
    <citation type="journal article" date="1991" name="J. Biol. Chem.">
        <title>cDNA cloning of a myosin heavy chain isoform in embryonic smooth muscle and its expression during vascular development and in arteriosclerosis.</title>
        <authorList>
            <person name="Kuro-o M."/>
            <person name="Nagai R."/>
            <person name="Nakahara K."/>
            <person name="Katoh H."/>
            <person name="Tsai R.C."/>
            <person name="Tsuchimochi H."/>
            <person name="Yazaki Y."/>
            <person name="Ohkubo A."/>
            <person name="Takaku F."/>
        </authorList>
    </citation>
    <scope>NUCLEOTIDE SEQUENCE [MRNA]</scope>
    <source>
        <tissue>Fetal aorta</tissue>
    </source>
</reference>
<comment type="function">
    <text>Muscle contraction.</text>
</comment>
<comment type="subunit">
    <text>Muscle myosin is a hexameric protein that consists of 2 heavy chain subunits (MHC), 2 alkali light chain subunits (MLC) and 2 regulatory light chain subunits (MLC-2).</text>
</comment>
<comment type="subcellular location">
    <subcellularLocation>
        <location>Cytoplasm</location>
        <location>Myofibril</location>
    </subcellularLocation>
    <text>Thick filaments of the myofibrils.</text>
</comment>
<comment type="domain">
    <text>The rodlike tail sequence is highly repetitive, showing cycles of a 28-residue repeat pattern composed of 4 heptapeptides, characteristic for alpha-helical coiled coils.</text>
</comment>
<comment type="domain">
    <text evidence="3">Limited proteolysis of myosin heavy chain produces 1 light meromyosin (LMM) and 1 heavy meromyosin (HMM). HMM can be further cleaved into 2 globular subfragments (S1) and 1 rod-shaped subfragment (S2).</text>
</comment>